<organism>
    <name type="scientific">Streptomyces coelicolor (strain ATCC BAA-471 / A3(2) / M145)</name>
    <dbReference type="NCBI Taxonomy" id="100226"/>
    <lineage>
        <taxon>Bacteria</taxon>
        <taxon>Bacillati</taxon>
        <taxon>Actinomycetota</taxon>
        <taxon>Actinomycetes</taxon>
        <taxon>Kitasatosporales</taxon>
        <taxon>Streptomycetaceae</taxon>
        <taxon>Streptomyces</taxon>
        <taxon>Streptomyces albidoflavus group</taxon>
    </lineage>
</organism>
<proteinExistence type="inferred from homology"/>
<protein>
    <recommendedName>
        <fullName evidence="1">Glycine--tRNA ligase</fullName>
        <ecNumber evidence="1">6.1.1.14</ecNumber>
    </recommendedName>
    <alternativeName>
        <fullName evidence="1">Glycyl-tRNA synthetase</fullName>
        <shortName evidence="1">GlyRS</shortName>
    </alternativeName>
</protein>
<name>SYG_STRCO</name>
<dbReference type="EC" id="6.1.1.14" evidence="1"/>
<dbReference type="EMBL" id="AL939112">
    <property type="protein sequence ID" value="CAB69725.1"/>
    <property type="molecule type" value="Genomic_DNA"/>
</dbReference>
<dbReference type="RefSeq" id="NP_626744.1">
    <property type="nucleotide sequence ID" value="NC_003888.3"/>
</dbReference>
<dbReference type="RefSeq" id="WP_003976298.1">
    <property type="nucleotide sequence ID" value="NZ_VNID01000001.1"/>
</dbReference>
<dbReference type="SMR" id="Q9L2H9"/>
<dbReference type="FunCoup" id="Q9L2H9">
    <property type="interactions" value="415"/>
</dbReference>
<dbReference type="STRING" id="100226.gene:17760106"/>
<dbReference type="PaxDb" id="100226-SCO2504"/>
<dbReference type="KEGG" id="sco:SCO2504"/>
<dbReference type="PATRIC" id="fig|100226.15.peg.2549"/>
<dbReference type="eggNOG" id="COG0423">
    <property type="taxonomic scope" value="Bacteria"/>
</dbReference>
<dbReference type="HOGENOM" id="CLU_015515_2_1_11"/>
<dbReference type="InParanoid" id="Q9L2H9"/>
<dbReference type="OrthoDB" id="9760853at2"/>
<dbReference type="PhylomeDB" id="Q9L2H9"/>
<dbReference type="Proteomes" id="UP000001973">
    <property type="component" value="Chromosome"/>
</dbReference>
<dbReference type="GO" id="GO:0005737">
    <property type="term" value="C:cytoplasm"/>
    <property type="evidence" value="ECO:0000318"/>
    <property type="project" value="GO_Central"/>
</dbReference>
<dbReference type="GO" id="GO:0005524">
    <property type="term" value="F:ATP binding"/>
    <property type="evidence" value="ECO:0007669"/>
    <property type="project" value="UniProtKB-UniRule"/>
</dbReference>
<dbReference type="GO" id="GO:0004820">
    <property type="term" value="F:glycine-tRNA ligase activity"/>
    <property type="evidence" value="ECO:0000250"/>
    <property type="project" value="UniProtKB"/>
</dbReference>
<dbReference type="GO" id="GO:0046983">
    <property type="term" value="F:protein dimerization activity"/>
    <property type="evidence" value="ECO:0000250"/>
    <property type="project" value="UniProtKB"/>
</dbReference>
<dbReference type="GO" id="GO:0006426">
    <property type="term" value="P:glycyl-tRNA aminoacylation"/>
    <property type="evidence" value="ECO:0000318"/>
    <property type="project" value="GO_Central"/>
</dbReference>
<dbReference type="CDD" id="cd00774">
    <property type="entry name" value="GlyRS-like_core"/>
    <property type="match status" value="1"/>
</dbReference>
<dbReference type="CDD" id="cd00858">
    <property type="entry name" value="GlyRS_anticodon"/>
    <property type="match status" value="1"/>
</dbReference>
<dbReference type="FunFam" id="3.40.50.800:FF:000002">
    <property type="entry name" value="Glycine--tRNA ligase"/>
    <property type="match status" value="1"/>
</dbReference>
<dbReference type="Gene3D" id="3.40.50.800">
    <property type="entry name" value="Anticodon-binding domain"/>
    <property type="match status" value="1"/>
</dbReference>
<dbReference type="Gene3D" id="3.30.930.10">
    <property type="entry name" value="Bira Bifunctional Protein, Domain 2"/>
    <property type="match status" value="1"/>
</dbReference>
<dbReference type="HAMAP" id="MF_00253_B">
    <property type="entry name" value="Gly_tRNA_synth_B"/>
    <property type="match status" value="1"/>
</dbReference>
<dbReference type="InterPro" id="IPR002314">
    <property type="entry name" value="aa-tRNA-synt_IIb"/>
</dbReference>
<dbReference type="InterPro" id="IPR006195">
    <property type="entry name" value="aa-tRNA-synth_II"/>
</dbReference>
<dbReference type="InterPro" id="IPR045864">
    <property type="entry name" value="aa-tRNA-synth_II/BPL/LPL"/>
</dbReference>
<dbReference type="InterPro" id="IPR004154">
    <property type="entry name" value="Anticodon-bd"/>
</dbReference>
<dbReference type="InterPro" id="IPR036621">
    <property type="entry name" value="Anticodon-bd_dom_sf"/>
</dbReference>
<dbReference type="InterPro" id="IPR027031">
    <property type="entry name" value="Gly-tRNA_synthase/POLG2"/>
</dbReference>
<dbReference type="InterPro" id="IPR022961">
    <property type="entry name" value="Gly_tRNA_ligase_bac"/>
</dbReference>
<dbReference type="InterPro" id="IPR033731">
    <property type="entry name" value="GlyRS-like_core"/>
</dbReference>
<dbReference type="InterPro" id="IPR002315">
    <property type="entry name" value="tRNA-synt_gly"/>
</dbReference>
<dbReference type="NCBIfam" id="TIGR00389">
    <property type="entry name" value="glyS_dimeric"/>
    <property type="match status" value="1"/>
</dbReference>
<dbReference type="NCBIfam" id="NF003211">
    <property type="entry name" value="PRK04173.1"/>
    <property type="match status" value="1"/>
</dbReference>
<dbReference type="PANTHER" id="PTHR10745:SF8">
    <property type="entry name" value="DNA POLYMERASE SUBUNIT GAMMA-2, MITOCHONDRIAL"/>
    <property type="match status" value="1"/>
</dbReference>
<dbReference type="PANTHER" id="PTHR10745">
    <property type="entry name" value="GLYCYL-TRNA SYNTHETASE/DNA POLYMERASE SUBUNIT GAMMA-2"/>
    <property type="match status" value="1"/>
</dbReference>
<dbReference type="Pfam" id="PF03129">
    <property type="entry name" value="HGTP_anticodon"/>
    <property type="match status" value="1"/>
</dbReference>
<dbReference type="Pfam" id="PF00587">
    <property type="entry name" value="tRNA-synt_2b"/>
    <property type="match status" value="1"/>
</dbReference>
<dbReference type="PRINTS" id="PR01043">
    <property type="entry name" value="TRNASYNTHGLY"/>
</dbReference>
<dbReference type="SUPFAM" id="SSF52954">
    <property type="entry name" value="Class II aaRS ABD-related"/>
    <property type="match status" value="1"/>
</dbReference>
<dbReference type="SUPFAM" id="SSF55681">
    <property type="entry name" value="Class II aaRS and biotin synthetases"/>
    <property type="match status" value="1"/>
</dbReference>
<dbReference type="PROSITE" id="PS50862">
    <property type="entry name" value="AA_TRNA_LIGASE_II"/>
    <property type="match status" value="1"/>
</dbReference>
<gene>
    <name evidence="1" type="primary">glyQS</name>
    <name type="synonym">glyS</name>
    <name type="ordered locus">SCO2504</name>
    <name type="ORF">SCC121.07c</name>
</gene>
<accession>Q9L2H9</accession>
<comment type="function">
    <text evidence="1">Catalyzes the attachment of glycine to tRNA(Gly).</text>
</comment>
<comment type="catalytic activity">
    <reaction evidence="1">
        <text>tRNA(Gly) + glycine + ATP = glycyl-tRNA(Gly) + AMP + diphosphate</text>
        <dbReference type="Rhea" id="RHEA:16013"/>
        <dbReference type="Rhea" id="RHEA-COMP:9664"/>
        <dbReference type="Rhea" id="RHEA-COMP:9683"/>
        <dbReference type="ChEBI" id="CHEBI:30616"/>
        <dbReference type="ChEBI" id="CHEBI:33019"/>
        <dbReference type="ChEBI" id="CHEBI:57305"/>
        <dbReference type="ChEBI" id="CHEBI:78442"/>
        <dbReference type="ChEBI" id="CHEBI:78522"/>
        <dbReference type="ChEBI" id="CHEBI:456215"/>
        <dbReference type="EC" id="6.1.1.14"/>
    </reaction>
</comment>
<comment type="subunit">
    <text evidence="1">Homodimer.</text>
</comment>
<comment type="subcellular location">
    <subcellularLocation>
        <location evidence="1">Cytoplasm</location>
    </subcellularLocation>
</comment>
<comment type="similarity">
    <text evidence="1">Belongs to the class-II aminoacyl-tRNA synthetase family.</text>
</comment>
<evidence type="ECO:0000255" key="1">
    <source>
        <dbReference type="HAMAP-Rule" id="MF_00253"/>
    </source>
</evidence>
<reference key="1">
    <citation type="journal article" date="2002" name="Nature">
        <title>Complete genome sequence of the model actinomycete Streptomyces coelicolor A3(2).</title>
        <authorList>
            <person name="Bentley S.D."/>
            <person name="Chater K.F."/>
            <person name="Cerdeno-Tarraga A.-M."/>
            <person name="Challis G.L."/>
            <person name="Thomson N.R."/>
            <person name="James K.D."/>
            <person name="Harris D.E."/>
            <person name="Quail M.A."/>
            <person name="Kieser H."/>
            <person name="Harper D."/>
            <person name="Bateman A."/>
            <person name="Brown S."/>
            <person name="Chandra G."/>
            <person name="Chen C.W."/>
            <person name="Collins M."/>
            <person name="Cronin A."/>
            <person name="Fraser A."/>
            <person name="Goble A."/>
            <person name="Hidalgo J."/>
            <person name="Hornsby T."/>
            <person name="Howarth S."/>
            <person name="Huang C.-H."/>
            <person name="Kieser T."/>
            <person name="Larke L."/>
            <person name="Murphy L.D."/>
            <person name="Oliver K."/>
            <person name="O'Neil S."/>
            <person name="Rabbinowitsch E."/>
            <person name="Rajandream M.A."/>
            <person name="Rutherford K.M."/>
            <person name="Rutter S."/>
            <person name="Seeger K."/>
            <person name="Saunders D."/>
            <person name="Sharp S."/>
            <person name="Squares R."/>
            <person name="Squares S."/>
            <person name="Taylor K."/>
            <person name="Warren T."/>
            <person name="Wietzorrek A."/>
            <person name="Woodward J.R."/>
            <person name="Barrell B.G."/>
            <person name="Parkhill J."/>
            <person name="Hopwood D.A."/>
        </authorList>
    </citation>
    <scope>NUCLEOTIDE SEQUENCE [LARGE SCALE GENOMIC DNA]</scope>
    <source>
        <strain>ATCC BAA-471 / A3(2) / M145</strain>
    </source>
</reference>
<keyword id="KW-0030">Aminoacyl-tRNA synthetase</keyword>
<keyword id="KW-0067">ATP-binding</keyword>
<keyword id="KW-0963">Cytoplasm</keyword>
<keyword id="KW-0436">Ligase</keyword>
<keyword id="KW-0547">Nucleotide-binding</keyword>
<keyword id="KW-0648">Protein biosynthesis</keyword>
<keyword id="KW-1185">Reference proteome</keyword>
<sequence length="460" mass="52440">MAADKIDTIVSLSKRRGFVFPCSEIYGGQRAAWDYGPLGVELKENLKRQWWRYMVTSREDVVGLDSSVILAPEVWVASGHVATFTDPLTECTSCHKRFRADHLEEAYEEKKGHAPENGLADLNCPNCGNKGTFTEPKQFSGLLSTHLGPTQDSGSVAYLRPETAQGIFTNFAQVQTTSRRKPPFGIAQMGKSFRNEITPGNFIFRTREFEQMEMEFFVKPGEDEKWQEYWMEQRWNWYTGLGLREENMRWYEHPAEKLSHYSKRTADIEYRFSFGGSEWGELEGVANRTDYDLSSHAKASGQDLSYYDQEAQERWTPYVIEPAAGVGRAMLAFLLDAYIEDEAPNAKGKLEKRTVLRLDPRLSPVKVAVLPLSRNPELSPKAKGLAQALRQNWNIEFDDAGAIGRRYRRQDEIGTPFCVTVDFDTLDDNAVTVRERDTMKQERVSLDQIEGYLASRLVGC</sequence>
<feature type="chain" id="PRO_0000072981" description="Glycine--tRNA ligase">
    <location>
        <begin position="1"/>
        <end position="460"/>
    </location>
</feature>
<feature type="binding site" evidence="1">
    <location>
        <position position="99"/>
    </location>
    <ligand>
        <name>substrate</name>
    </ligand>
</feature>
<feature type="binding site" evidence="1">
    <location>
        <position position="162"/>
    </location>
    <ligand>
        <name>substrate</name>
    </ligand>
</feature>
<feature type="binding site" evidence="1">
    <location>
        <begin position="194"/>
        <end position="196"/>
    </location>
    <ligand>
        <name>ATP</name>
        <dbReference type="ChEBI" id="CHEBI:30616"/>
    </ligand>
</feature>
<feature type="binding site" evidence="1">
    <location>
        <begin position="204"/>
        <end position="209"/>
    </location>
    <ligand>
        <name>ATP</name>
        <dbReference type="ChEBI" id="CHEBI:30616"/>
    </ligand>
</feature>
<feature type="binding site" evidence="1">
    <location>
        <begin position="209"/>
        <end position="213"/>
    </location>
    <ligand>
        <name>substrate</name>
    </ligand>
</feature>
<feature type="binding site" evidence="1">
    <location>
        <begin position="281"/>
        <end position="282"/>
    </location>
    <ligand>
        <name>ATP</name>
        <dbReference type="ChEBI" id="CHEBI:30616"/>
    </ligand>
</feature>
<feature type="binding site" evidence="1">
    <location>
        <begin position="321"/>
        <end position="325"/>
    </location>
    <ligand>
        <name>substrate</name>
    </ligand>
</feature>
<feature type="binding site" evidence="1">
    <location>
        <begin position="325"/>
        <end position="328"/>
    </location>
    <ligand>
        <name>ATP</name>
        <dbReference type="ChEBI" id="CHEBI:30616"/>
    </ligand>
</feature>